<comment type="function">
    <text evidence="3">Cleaves the 2'-5' phosphodiester linkage at the branch point of excised lariat intron RNA and converts them into linear molecules that can be subsequently degraded, thereby facilitating ribonucleotide turnover. Linked to its role in pre-mRNA processing mechanism, may also participate in retrovirus replication and have an antiviral cell-intrinsic defense function.</text>
</comment>
<comment type="cofactor">
    <cofactor evidence="2">
        <name>Fe(2+)</name>
        <dbReference type="ChEBI" id="CHEBI:29033"/>
    </cofactor>
    <cofactor evidence="2">
        <name>Zn(2+)</name>
        <dbReference type="ChEBI" id="CHEBI:29105"/>
    </cofactor>
    <cofactor evidence="3">
        <name>Mn(2+)</name>
        <dbReference type="ChEBI" id="CHEBI:29035"/>
    </cofactor>
    <text evidence="2">Binds 2 divalent metal cations per subunit.</text>
</comment>
<comment type="activity regulation">
    <text evidence="2 3">Active in presence of diverse metals including Fe(2+), Zn(2+), Mn(2+) (By similarity). Also activated by Ca(2+) (By similarity). Binds two metal cations in two adjacent alpha and beta metal-binding pockets (By similarity).</text>
</comment>
<comment type="subcellular location">
    <subcellularLocation>
        <location evidence="6">Nucleus</location>
    </subcellularLocation>
</comment>
<comment type="similarity">
    <text evidence="6">Belongs to the lariat debranching enzyme family.</text>
</comment>
<dbReference type="EC" id="3.1.4.-" evidence="3"/>
<dbReference type="EMBL" id="BC053153">
    <property type="protein sequence ID" value="AAH53153.1"/>
    <property type="molecule type" value="mRNA"/>
</dbReference>
<dbReference type="RefSeq" id="NP_955947.1">
    <property type="nucleotide sequence ID" value="NM_199653.1"/>
</dbReference>
<dbReference type="SMR" id="Q7T3E4"/>
<dbReference type="FunCoup" id="Q7T3E4">
    <property type="interactions" value="1826"/>
</dbReference>
<dbReference type="STRING" id="7955.ENSDARP00000073957"/>
<dbReference type="iPTMnet" id="Q7T3E4"/>
<dbReference type="PaxDb" id="7955-ENSDARP00000073957"/>
<dbReference type="GeneID" id="323746"/>
<dbReference type="KEGG" id="dre:323746"/>
<dbReference type="AGR" id="ZFIN:ZDB-GENE-030131-2466"/>
<dbReference type="CTD" id="51163"/>
<dbReference type="ZFIN" id="ZDB-GENE-030131-2466">
    <property type="gene designation" value="dbr1"/>
</dbReference>
<dbReference type="eggNOG" id="KOG2863">
    <property type="taxonomic scope" value="Eukaryota"/>
</dbReference>
<dbReference type="InParanoid" id="Q7T3E4"/>
<dbReference type="OrthoDB" id="407609at2759"/>
<dbReference type="PhylomeDB" id="Q7T3E4"/>
<dbReference type="PRO" id="PR:Q7T3E4"/>
<dbReference type="Proteomes" id="UP000000437">
    <property type="component" value="Alternate scaffold 9"/>
</dbReference>
<dbReference type="Proteomes" id="UP000000437">
    <property type="component" value="Chromosome 9"/>
</dbReference>
<dbReference type="GO" id="GO:0005634">
    <property type="term" value="C:nucleus"/>
    <property type="evidence" value="ECO:0000250"/>
    <property type="project" value="UniProtKB"/>
</dbReference>
<dbReference type="GO" id="GO:0046872">
    <property type="term" value="F:metal ion binding"/>
    <property type="evidence" value="ECO:0007669"/>
    <property type="project" value="UniProtKB-KW"/>
</dbReference>
<dbReference type="GO" id="GO:0008419">
    <property type="term" value="F:RNA lariat debranching enzyme activity"/>
    <property type="evidence" value="ECO:0000250"/>
    <property type="project" value="UniProtKB"/>
</dbReference>
<dbReference type="GO" id="GO:0000398">
    <property type="term" value="P:mRNA splicing, via spliceosome"/>
    <property type="evidence" value="ECO:0000318"/>
    <property type="project" value="GO_Central"/>
</dbReference>
<dbReference type="GO" id="GO:0000375">
    <property type="term" value="P:RNA splicing, via transesterification reactions"/>
    <property type="evidence" value="ECO:0000250"/>
    <property type="project" value="UniProtKB"/>
</dbReference>
<dbReference type="CDD" id="cd00844">
    <property type="entry name" value="MPP_Dbr1_N"/>
    <property type="match status" value="1"/>
</dbReference>
<dbReference type="FunFam" id="3.60.21.10:FF:000035">
    <property type="entry name" value="Lariat debranching enzyme"/>
    <property type="match status" value="1"/>
</dbReference>
<dbReference type="Gene3D" id="3.60.21.10">
    <property type="match status" value="1"/>
</dbReference>
<dbReference type="InterPro" id="IPR004843">
    <property type="entry name" value="Calcineurin-like_PHP_ApaH"/>
</dbReference>
<dbReference type="InterPro" id="IPR007708">
    <property type="entry name" value="DBR1_C"/>
</dbReference>
<dbReference type="InterPro" id="IPR041816">
    <property type="entry name" value="Dbr1_N"/>
</dbReference>
<dbReference type="InterPro" id="IPR029052">
    <property type="entry name" value="Metallo-depent_PP-like"/>
</dbReference>
<dbReference type="PANTHER" id="PTHR12849:SF0">
    <property type="entry name" value="LARIAT DEBRANCHING ENZYME"/>
    <property type="match status" value="1"/>
</dbReference>
<dbReference type="PANTHER" id="PTHR12849">
    <property type="entry name" value="RNA LARIAT DEBRANCHING ENZYME"/>
    <property type="match status" value="1"/>
</dbReference>
<dbReference type="Pfam" id="PF05011">
    <property type="entry name" value="DBR1"/>
    <property type="match status" value="1"/>
</dbReference>
<dbReference type="Pfam" id="PF00149">
    <property type="entry name" value="Metallophos"/>
    <property type="match status" value="1"/>
</dbReference>
<dbReference type="SMART" id="SM01124">
    <property type="entry name" value="DBR1"/>
    <property type="match status" value="1"/>
</dbReference>
<dbReference type="SUPFAM" id="SSF56300">
    <property type="entry name" value="Metallo-dependent phosphatases"/>
    <property type="match status" value="1"/>
</dbReference>
<reference key="1">
    <citation type="submission" date="2003-06" db="EMBL/GenBank/DDBJ databases">
        <authorList>
            <consortium name="NIH - Zebrafish Gene Collection (ZGC) project"/>
        </authorList>
    </citation>
    <scope>NUCLEOTIDE SEQUENCE [LARGE SCALE MRNA]</scope>
    <source>
        <tissue>Kidney</tissue>
    </source>
</reference>
<reference key="2">
    <citation type="journal article" date="2008" name="J. Proteome Res.">
        <title>Online automated in vivo zebrafish phosphoproteomics: from large-scale analysis down to a single embryo.</title>
        <authorList>
            <person name="Lemeer S."/>
            <person name="Pinkse M.W.H."/>
            <person name="Mohammed S."/>
            <person name="van Breukelen B."/>
            <person name="den Hertog J."/>
            <person name="Slijper M."/>
            <person name="Heck A.J.R."/>
        </authorList>
    </citation>
    <scope>PHOSPHORYLATION [LARGE SCALE ANALYSIS] AT THR-478 AND SER-568</scope>
    <scope>IDENTIFICATION BY MASS SPECTROMETRY</scope>
    <source>
        <tissue>Embryo</tissue>
    </source>
</reference>
<evidence type="ECO:0000250" key="1">
    <source>
        <dbReference type="UniProtKB" id="C4M1P9"/>
    </source>
</evidence>
<evidence type="ECO:0000250" key="2">
    <source>
        <dbReference type="UniProtKB" id="P24309"/>
    </source>
</evidence>
<evidence type="ECO:0000250" key="3">
    <source>
        <dbReference type="UniProtKB" id="Q9UK59"/>
    </source>
</evidence>
<evidence type="ECO:0000256" key="4">
    <source>
        <dbReference type="SAM" id="MobiDB-lite"/>
    </source>
</evidence>
<evidence type="ECO:0000269" key="5">
    <source>
    </source>
</evidence>
<evidence type="ECO:0000305" key="6"/>
<organism>
    <name type="scientific">Danio rerio</name>
    <name type="common">Zebrafish</name>
    <name type="synonym">Brachydanio rerio</name>
    <dbReference type="NCBI Taxonomy" id="7955"/>
    <lineage>
        <taxon>Eukaryota</taxon>
        <taxon>Metazoa</taxon>
        <taxon>Chordata</taxon>
        <taxon>Craniata</taxon>
        <taxon>Vertebrata</taxon>
        <taxon>Euteleostomi</taxon>
        <taxon>Actinopterygii</taxon>
        <taxon>Neopterygii</taxon>
        <taxon>Teleostei</taxon>
        <taxon>Ostariophysi</taxon>
        <taxon>Cypriniformes</taxon>
        <taxon>Danionidae</taxon>
        <taxon>Danioninae</taxon>
        <taxon>Danio</taxon>
    </lineage>
</organism>
<proteinExistence type="evidence at protein level"/>
<accession>Q7T3E4</accession>
<feature type="chain" id="PRO_0000250361" description="Lariat debranching enzyme">
    <location>
        <begin position="1"/>
        <end position="568"/>
    </location>
</feature>
<feature type="region of interest" description="Lariat recognition loop" evidence="1">
    <location>
        <begin position="124"/>
        <end position="154"/>
    </location>
</feature>
<feature type="region of interest" description="Disordered" evidence="4">
    <location>
        <begin position="388"/>
        <end position="568"/>
    </location>
</feature>
<feature type="compositionally biased region" description="Polar residues" evidence="4">
    <location>
        <begin position="417"/>
        <end position="428"/>
    </location>
</feature>
<feature type="compositionally biased region" description="Acidic residues" evidence="4">
    <location>
        <begin position="432"/>
        <end position="444"/>
    </location>
</feature>
<feature type="compositionally biased region" description="Basic and acidic residues" evidence="4">
    <location>
        <begin position="467"/>
        <end position="480"/>
    </location>
</feature>
<feature type="compositionally biased region" description="Low complexity" evidence="4">
    <location>
        <begin position="534"/>
        <end position="549"/>
    </location>
</feature>
<feature type="binding site" evidence="1">
    <location>
        <position position="8"/>
    </location>
    <ligand>
        <name>a divalent metal cation</name>
        <dbReference type="ChEBI" id="CHEBI:60240"/>
        <label>1</label>
    </ligand>
</feature>
<feature type="binding site" evidence="1">
    <location>
        <position position="10"/>
    </location>
    <ligand>
        <name>a divalent metal cation</name>
        <dbReference type="ChEBI" id="CHEBI:60240"/>
        <label>1</label>
    </ligand>
</feature>
<feature type="binding site" evidence="1">
    <location>
        <position position="39"/>
    </location>
    <ligand>
        <name>a divalent metal cation</name>
        <dbReference type="ChEBI" id="CHEBI:60240"/>
        <label>2</label>
    </ligand>
</feature>
<feature type="binding site" evidence="1">
    <location>
        <position position="84"/>
    </location>
    <ligand>
        <name>a divalent metal cation</name>
        <dbReference type="ChEBI" id="CHEBI:60240"/>
        <label>2</label>
    </ligand>
</feature>
<feature type="binding site" evidence="1">
    <location>
        <position position="174"/>
    </location>
    <ligand>
        <name>a divalent metal cation</name>
        <dbReference type="ChEBI" id="CHEBI:60240"/>
        <label>2</label>
    </ligand>
</feature>
<feature type="binding site" evidence="1">
    <location>
        <position position="226"/>
    </location>
    <ligand>
        <name>a divalent metal cation</name>
        <dbReference type="ChEBI" id="CHEBI:60240"/>
        <label>2</label>
    </ligand>
</feature>
<feature type="binding site" evidence="1">
    <location>
        <position position="228"/>
    </location>
    <ligand>
        <name>a divalent metal cation</name>
        <dbReference type="ChEBI" id="CHEBI:60240"/>
        <label>1</label>
    </ligand>
</feature>
<feature type="modified residue" description="Phosphothreonine" evidence="5">
    <location>
        <position position="478"/>
    </location>
</feature>
<feature type="modified residue" description="Phosphoserine" evidence="5">
    <location>
        <position position="568"/>
    </location>
</feature>
<keyword id="KW-0378">Hydrolase</keyword>
<keyword id="KW-0408">Iron</keyword>
<keyword id="KW-0464">Manganese</keyword>
<keyword id="KW-0479">Metal-binding</keyword>
<keyword id="KW-0507">mRNA processing</keyword>
<keyword id="KW-0539">Nucleus</keyword>
<keyword id="KW-0597">Phosphoprotein</keyword>
<keyword id="KW-1185">Reference proteome</keyword>
<keyword id="KW-0862">Zinc</keyword>
<name>DBR1_DANRE</name>
<sequence>MKVAVEGCCHGELDKIYESISYLENKDGVKVDLLLCCGDFQAVRNEGDMKCMAVPAKYRHMQTFYKYYSGEKKAPVLTIFIGGNHEASNHLQELPYGGWVAPNIYYLGYAGVIRYKGVRIGGLSGIFKSHDFKKGHFEFPPYNPETLRSVYHIRNIDVFKLKQIKMPIDIFMTHDWPRGIYHYGNTNALLRQKKFLRQEVESSTLGSPAAADLLEHLQPSYWFSAHLHVKFAALMQHEAKNNTAPKITKFLSLDKCLPHRDFLQIVEVADRPGSSEQLEYDPEWLAILKATDNLQKPTCNFWNPPQDNGLHSRWDFSASEEAMMEVVSDLSGDLCIPENFSLTVPPYDPSQPQPHALPAYSTNPQTTELCATLNLTDIYILAGQSGQIYGERGGKGATEEEDEEDSTGSADEPSDFPSDTSGLSSSYNPDEITIEDEWEEEEDGGVGCGEGKGMDAVVPEGQVGSQDSDRDSSPQRETAKRLILPAPCAKPKTEAPLHSLPRLSLPPPSACVSQGSSEEEGAFTAARVPKRTSGETTQSSAGQTGGTPQIKRRNQSIYTAVEDEESDS</sequence>
<gene>
    <name type="primary">dbr1</name>
    <name type="ORF">zgc:63930</name>
</gene>
<protein>
    <recommendedName>
        <fullName>Lariat debranching enzyme</fullName>
        <ecNumber evidence="3">3.1.4.-</ecNumber>
    </recommendedName>
</protein>